<keyword id="KW-0002">3D-structure</keyword>
<keyword id="KW-1185">Reference proteome</keyword>
<evidence type="ECO:0000269" key="1">
    <source>
    </source>
</evidence>
<evidence type="ECO:0000312" key="2">
    <source>
        <dbReference type="SGD" id="S000028519"/>
    </source>
</evidence>
<evidence type="ECO:0007829" key="3">
    <source>
        <dbReference type="PDB" id="4XPM"/>
    </source>
</evidence>
<evidence type="ECO:0007829" key="4">
    <source>
        <dbReference type="PDB" id="6JWP"/>
    </source>
</evidence>
<protein>
    <recommendedName>
        <fullName>Protein EGO2</fullName>
    </recommendedName>
</protein>
<feature type="chain" id="PRO_0000248451" description="Protein EGO2">
    <location>
        <begin position="1"/>
        <end position="75"/>
    </location>
</feature>
<feature type="strand" evidence="3">
    <location>
        <begin position="11"/>
        <end position="16"/>
    </location>
</feature>
<feature type="strand" evidence="4">
    <location>
        <begin position="17"/>
        <end position="19"/>
    </location>
</feature>
<feature type="strand" evidence="3">
    <location>
        <begin position="21"/>
        <end position="26"/>
    </location>
</feature>
<feature type="helix" evidence="3">
    <location>
        <begin position="27"/>
        <end position="30"/>
    </location>
</feature>
<feature type="helix" evidence="3">
    <location>
        <begin position="32"/>
        <end position="34"/>
    </location>
</feature>
<feature type="helix" evidence="3">
    <location>
        <begin position="35"/>
        <end position="38"/>
    </location>
</feature>
<feature type="strand" evidence="3">
    <location>
        <begin position="47"/>
        <end position="63"/>
    </location>
</feature>
<feature type="strand" evidence="3">
    <location>
        <begin position="66"/>
        <end position="73"/>
    </location>
</feature>
<organism>
    <name type="scientific">Saccharomyces cerevisiae (strain ATCC 204508 / S288c)</name>
    <name type="common">Baker's yeast</name>
    <dbReference type="NCBI Taxonomy" id="559292"/>
    <lineage>
        <taxon>Eukaryota</taxon>
        <taxon>Fungi</taxon>
        <taxon>Dikarya</taxon>
        <taxon>Ascomycota</taxon>
        <taxon>Saccharomycotina</taxon>
        <taxon>Saccharomycetes</taxon>
        <taxon>Saccharomycetales</taxon>
        <taxon>Saccharomycetaceae</taxon>
        <taxon>Saccharomyces</taxon>
    </lineage>
</organism>
<dbReference type="EMBL" id="X59720">
    <property type="status" value="NOT_ANNOTATED_CDS"/>
    <property type="molecule type" value="Genomic_DNA"/>
</dbReference>
<dbReference type="EMBL" id="BK006937">
    <property type="protein sequence ID" value="DAA07547.1"/>
    <property type="molecule type" value="Genomic_DNA"/>
</dbReference>
<dbReference type="RefSeq" id="NP_878058.1">
    <property type="nucleotide sequence ID" value="NM_001184529.1"/>
</dbReference>
<dbReference type="PDB" id="4XPM">
    <property type="method" value="X-ray"/>
    <property type="resolution" value="2.40 A"/>
    <property type="chains" value="B=1-75"/>
</dbReference>
<dbReference type="PDB" id="6JWP">
    <property type="method" value="X-ray"/>
    <property type="resolution" value="3.20 A"/>
    <property type="chains" value="D/I=1-75"/>
</dbReference>
<dbReference type="PDBsum" id="4XPM"/>
<dbReference type="PDBsum" id="6JWP"/>
<dbReference type="SMR" id="Q3E830"/>
<dbReference type="BioGRID" id="36945">
    <property type="interactions" value="66"/>
</dbReference>
<dbReference type="ComplexPortal" id="CPX-3172">
    <property type="entry name" value="EGO complex"/>
</dbReference>
<dbReference type="FunCoup" id="Q3E830">
    <property type="interactions" value="9"/>
</dbReference>
<dbReference type="IntAct" id="Q3E830">
    <property type="interactions" value="4"/>
</dbReference>
<dbReference type="STRING" id="4932.YCR075W-A"/>
<dbReference type="iPTMnet" id="Q3E830"/>
<dbReference type="PaxDb" id="4932-YCR075W-A"/>
<dbReference type="PeptideAtlas" id="Q3E830"/>
<dbReference type="EnsemblFungi" id="YCR075W-A_mRNA">
    <property type="protein sequence ID" value="YCR075W-A"/>
    <property type="gene ID" value="YCR075W-A"/>
</dbReference>
<dbReference type="GeneID" id="1466399"/>
<dbReference type="KEGG" id="sce:YCR075W-A"/>
<dbReference type="AGR" id="SGD:S000028519"/>
<dbReference type="SGD" id="S000028519">
    <property type="gene designation" value="EGO2"/>
</dbReference>
<dbReference type="VEuPathDB" id="FungiDB:YCR075W-A"/>
<dbReference type="HOGENOM" id="CLU_173479_2_0_1"/>
<dbReference type="InParanoid" id="Q3E830"/>
<dbReference type="OMA" id="ICNIYRQ"/>
<dbReference type="OrthoDB" id="4057220at2759"/>
<dbReference type="BioCyc" id="YEAST:G3O-29425-MONOMER"/>
<dbReference type="BioGRID-ORCS" id="1466399">
    <property type="hits" value="10 hits in 10 CRISPR screens"/>
</dbReference>
<dbReference type="EvolutionaryTrace" id="Q3E830"/>
<dbReference type="PRO" id="PR:Q3E830"/>
<dbReference type="Proteomes" id="UP000002311">
    <property type="component" value="Chromosome III"/>
</dbReference>
<dbReference type="RNAct" id="Q3E830">
    <property type="molecule type" value="protein"/>
</dbReference>
<dbReference type="GO" id="GO:0000329">
    <property type="term" value="C:fungal-type vacuole membrane"/>
    <property type="evidence" value="ECO:0000314"/>
    <property type="project" value="SGD"/>
</dbReference>
<dbReference type="GO" id="GO:0071986">
    <property type="term" value="C:Ragulator complex"/>
    <property type="evidence" value="ECO:0000353"/>
    <property type="project" value="SGD"/>
</dbReference>
<dbReference type="GO" id="GO:0016237">
    <property type="term" value="P:microautophagy"/>
    <property type="evidence" value="ECO:0000303"/>
    <property type="project" value="ComplexPortal"/>
</dbReference>
<dbReference type="GO" id="GO:0032008">
    <property type="term" value="P:positive regulation of TOR signaling"/>
    <property type="evidence" value="ECO:0000303"/>
    <property type="project" value="ComplexPortal"/>
</dbReference>
<dbReference type="GO" id="GO:0072665">
    <property type="term" value="P:protein localization to vacuole"/>
    <property type="evidence" value="ECO:0000315"/>
    <property type="project" value="SGD"/>
</dbReference>
<dbReference type="GO" id="GO:0038202">
    <property type="term" value="P:TORC1 signaling"/>
    <property type="evidence" value="ECO:0000315"/>
    <property type="project" value="SGD"/>
</dbReference>
<dbReference type="FunFam" id="3.40.1840.10:FF:000002">
    <property type="entry name" value="Conserved protein"/>
    <property type="match status" value="1"/>
</dbReference>
<dbReference type="Gene3D" id="3.40.1840.10">
    <property type="entry name" value="YNR034W-A-like"/>
    <property type="match status" value="1"/>
</dbReference>
<dbReference type="InterPro" id="IPR021591">
    <property type="entry name" value="YNR034W-A/EGO2"/>
</dbReference>
<dbReference type="InterPro" id="IPR035098">
    <property type="entry name" value="YNR034W-A/EGO2_sf"/>
</dbReference>
<dbReference type="Pfam" id="PF11503">
    <property type="entry name" value="YNR034W-A-like"/>
    <property type="match status" value="1"/>
</dbReference>
<dbReference type="SUPFAM" id="SSF160683">
    <property type="entry name" value="YNR034W-A-like"/>
    <property type="match status" value="1"/>
</dbReference>
<comment type="disruption phenotype">
    <text evidence="1">Sensitive to high hydrostatic pressure (mechanical stress).</text>
</comment>
<proteinExistence type="evidence at protein level"/>
<sequence length="75" mass="8097">MEAEKQSDIKGTIAFDTHGNVIESTGVGSQRIEDIGDLSKVTLDAEGFAQVQGDSLLVHLYKRNDITLAVYTSAQ</sequence>
<name>EGO2_YEAST</name>
<gene>
    <name evidence="2" type="primary">EGO2</name>
    <name evidence="2" type="ordered locus">YCR075W-A</name>
</gene>
<reference key="1">
    <citation type="journal article" date="1992" name="Nature">
        <title>The complete DNA sequence of yeast chromosome III.</title>
        <authorList>
            <person name="Oliver S.G."/>
            <person name="van der Aart Q.J.M."/>
            <person name="Agostoni-Carbone M.L."/>
            <person name="Aigle M."/>
            <person name="Alberghina L."/>
            <person name="Alexandraki D."/>
            <person name="Antoine G."/>
            <person name="Anwar R."/>
            <person name="Ballesta J.P.G."/>
            <person name="Benit P."/>
            <person name="Berben G."/>
            <person name="Bergantino E."/>
            <person name="Biteau N."/>
            <person name="Bolle P.-A."/>
            <person name="Bolotin-Fukuhara M."/>
            <person name="Brown A."/>
            <person name="Brown A.J.P."/>
            <person name="Buhler J.-M."/>
            <person name="Carcano C."/>
            <person name="Carignani G."/>
            <person name="Cederberg H."/>
            <person name="Chanet R."/>
            <person name="Contreras R."/>
            <person name="Crouzet M."/>
            <person name="Daignan-Fornier B."/>
            <person name="Defoor E."/>
            <person name="Delgado M.D."/>
            <person name="Demolder J."/>
            <person name="Doira C."/>
            <person name="Dubois E."/>
            <person name="Dujon B."/>
            <person name="Duesterhoeft A."/>
            <person name="Erdmann D."/>
            <person name="Esteban M."/>
            <person name="Fabre F."/>
            <person name="Fairhead C."/>
            <person name="Faye G."/>
            <person name="Feldmann H."/>
            <person name="Fiers W."/>
            <person name="Francingues-Gaillard M.-C."/>
            <person name="Franco L."/>
            <person name="Frontali L."/>
            <person name="Fukuhara H."/>
            <person name="Fuller L.J."/>
            <person name="Galland P."/>
            <person name="Gent M.E."/>
            <person name="Gigot D."/>
            <person name="Gilliquet V."/>
            <person name="Glansdorff N."/>
            <person name="Goffeau A."/>
            <person name="Grenson M."/>
            <person name="Grisanti P."/>
            <person name="Grivell L.A."/>
            <person name="de Haan M."/>
            <person name="Haasemann M."/>
            <person name="Hatat D."/>
            <person name="Hoenicka J."/>
            <person name="Hegemann J.H."/>
            <person name="Herbert C.J."/>
            <person name="Hilger F."/>
            <person name="Hohmann S."/>
            <person name="Hollenberg C.P."/>
            <person name="Huse K."/>
            <person name="Iborra F."/>
            <person name="Indge K.J."/>
            <person name="Isono K."/>
            <person name="Jacq C."/>
            <person name="Jacquet M."/>
            <person name="James C.M."/>
            <person name="Jauniaux J.-C."/>
            <person name="Jia Y."/>
            <person name="Jimenez A."/>
            <person name="Kelly A."/>
            <person name="Kleinhans U."/>
            <person name="Kreisl P."/>
            <person name="Lanfranchi G."/>
            <person name="Lewis C."/>
            <person name="van der Linden C.G."/>
            <person name="Lucchini G."/>
            <person name="Lutzenkirchen K."/>
            <person name="Maat M.J."/>
            <person name="Mallet L."/>
            <person name="Mannhaupt G."/>
            <person name="Martegani E."/>
            <person name="Mathieu A."/>
            <person name="Maurer C.T.C."/>
            <person name="McConnell D."/>
            <person name="McKee R.A."/>
            <person name="Messenguy F."/>
            <person name="Mewes H.-W."/>
            <person name="Molemans F."/>
            <person name="Montague M.A."/>
            <person name="Muzi Falconi M."/>
            <person name="Navas L."/>
            <person name="Newlon C.S."/>
            <person name="Noone D."/>
            <person name="Pallier C."/>
            <person name="Panzeri L."/>
            <person name="Pearson B.M."/>
            <person name="Perea J."/>
            <person name="Philippsen P."/>
            <person name="Pierard A."/>
            <person name="Planta R.J."/>
            <person name="Plevani P."/>
            <person name="Poetsch B."/>
            <person name="Pohl F.M."/>
            <person name="Purnelle B."/>
            <person name="Ramezani Rad M."/>
            <person name="Rasmussen S.W."/>
            <person name="Raynal A."/>
            <person name="Remacha M.A."/>
            <person name="Richterich P."/>
            <person name="Roberts A.B."/>
            <person name="Rodriguez F."/>
            <person name="Sanz E."/>
            <person name="Schaaff-Gerstenschlaeger I."/>
            <person name="Scherens B."/>
            <person name="Schweitzer B."/>
            <person name="Shu Y."/>
            <person name="Skala J."/>
            <person name="Slonimski P.P."/>
            <person name="Sor F."/>
            <person name="Soustelle C."/>
            <person name="Spiegelberg R."/>
            <person name="Stateva L.I."/>
            <person name="Steensma H.Y."/>
            <person name="Steiner S."/>
            <person name="Thierry A."/>
            <person name="Thireos G."/>
            <person name="Tzermia M."/>
            <person name="Urrestarazu L.A."/>
            <person name="Valle G."/>
            <person name="Vetter I."/>
            <person name="van Vliet-Reedijk J.C."/>
            <person name="Voet M."/>
            <person name="Volckaert G."/>
            <person name="Vreken P."/>
            <person name="Wang H."/>
            <person name="Warmington J.R."/>
            <person name="von Wettstein D."/>
            <person name="Wicksteed B.L."/>
            <person name="Wilson C."/>
            <person name="Wurst H."/>
            <person name="Xu G."/>
            <person name="Yoshikawa A."/>
            <person name="Zimmermann F.K."/>
            <person name="Sgouros J.G."/>
        </authorList>
    </citation>
    <scope>NUCLEOTIDE SEQUENCE [LARGE SCALE GENOMIC DNA]</scope>
    <source>
        <strain>ATCC 204508 / S288c</strain>
    </source>
</reference>
<reference key="2">
    <citation type="journal article" date="2014" name="G3 (Bethesda)">
        <title>The reference genome sequence of Saccharomyces cerevisiae: Then and now.</title>
        <authorList>
            <person name="Engel S.R."/>
            <person name="Dietrich F.S."/>
            <person name="Fisk D.G."/>
            <person name="Binkley G."/>
            <person name="Balakrishnan R."/>
            <person name="Costanzo M.C."/>
            <person name="Dwight S.S."/>
            <person name="Hitz B.C."/>
            <person name="Karra K."/>
            <person name="Nash R.S."/>
            <person name="Weng S."/>
            <person name="Wong E.D."/>
            <person name="Lloyd P."/>
            <person name="Skrzypek M.S."/>
            <person name="Miyasato S.R."/>
            <person name="Simison M."/>
            <person name="Cherry J.M."/>
        </authorList>
    </citation>
    <scope>GENOME REANNOTATION</scope>
    <source>
        <strain>ATCC 204508 / S288c</strain>
    </source>
</reference>
<reference key="3">
    <citation type="journal article" date="2003" name="Genome Biol.">
        <title>Reinvestigation of the Saccharomyces cerevisiae genome annotation by comparison to the genome of a related fungus: Ashbya gossypii.</title>
        <authorList>
            <person name="Brachat S."/>
            <person name="Dietrich F.S."/>
            <person name="Voegeli S."/>
            <person name="Zhang Z."/>
            <person name="Stuart L."/>
            <person name="Lerch A."/>
            <person name="Gates K."/>
            <person name="Gaffney T.D."/>
            <person name="Philippsen P."/>
        </authorList>
    </citation>
    <scope>GENOME REANNOTATION</scope>
</reference>
<reference key="4">
    <citation type="journal article" date="2020" name="J. Cell Sci.">
        <title>Amino acid homeostatic control by TORC1 in Saccharomyces cerevisiae under high hydrostatic pressure.</title>
        <authorList>
            <person name="Uemura S."/>
            <person name="Mochizuki T."/>
            <person name="Amemiya K."/>
            <person name="Kurosaka G."/>
            <person name="Yazawa M."/>
            <person name="Nakamoto K."/>
            <person name="Ishikawa Y."/>
            <person name="Izawa S."/>
            <person name="Abe F."/>
        </authorList>
    </citation>
    <scope>DISRUPTION PHENOTYPE</scope>
</reference>
<accession>Q3E830</accession>
<accession>D6VR78</accession>